<gene>
    <name type="ordered locus">Sputcn32_1369</name>
</gene>
<protein>
    <recommendedName>
        <fullName evidence="1">Probable phosphatase Sputcn32_1369</fullName>
        <ecNumber evidence="1">3.1.3.-</ecNumber>
    </recommendedName>
</protein>
<reference key="1">
    <citation type="submission" date="2007-04" db="EMBL/GenBank/DDBJ databases">
        <title>Complete sequence of Shewanella putrefaciens CN-32.</title>
        <authorList>
            <consortium name="US DOE Joint Genome Institute"/>
            <person name="Copeland A."/>
            <person name="Lucas S."/>
            <person name="Lapidus A."/>
            <person name="Barry K."/>
            <person name="Detter J.C."/>
            <person name="Glavina del Rio T."/>
            <person name="Hammon N."/>
            <person name="Israni S."/>
            <person name="Dalin E."/>
            <person name="Tice H."/>
            <person name="Pitluck S."/>
            <person name="Chain P."/>
            <person name="Malfatti S."/>
            <person name="Shin M."/>
            <person name="Vergez L."/>
            <person name="Schmutz J."/>
            <person name="Larimer F."/>
            <person name="Land M."/>
            <person name="Hauser L."/>
            <person name="Kyrpides N."/>
            <person name="Mikhailova N."/>
            <person name="Romine M.F."/>
            <person name="Fredrickson J."/>
            <person name="Tiedje J."/>
            <person name="Richardson P."/>
        </authorList>
    </citation>
    <scope>NUCLEOTIDE SEQUENCE [LARGE SCALE GENOMIC DNA]</scope>
    <source>
        <strain>CN-32 / ATCC BAA-453</strain>
    </source>
</reference>
<organism>
    <name type="scientific">Shewanella putrefaciens (strain CN-32 / ATCC BAA-453)</name>
    <dbReference type="NCBI Taxonomy" id="319224"/>
    <lineage>
        <taxon>Bacteria</taxon>
        <taxon>Pseudomonadati</taxon>
        <taxon>Pseudomonadota</taxon>
        <taxon>Gammaproteobacteria</taxon>
        <taxon>Alteromonadales</taxon>
        <taxon>Shewanellaceae</taxon>
        <taxon>Shewanella</taxon>
    </lineage>
</organism>
<proteinExistence type="inferred from homology"/>
<comment type="cofactor">
    <cofactor evidence="1">
        <name>Zn(2+)</name>
        <dbReference type="ChEBI" id="CHEBI:29105"/>
    </cofactor>
    <text evidence="1">Binds 3 Zn(2+) ions per subunit.</text>
</comment>
<comment type="similarity">
    <text evidence="1">Belongs to the PHP family.</text>
</comment>
<feature type="chain" id="PRO_1000069029" description="Probable phosphatase Sputcn32_1369">
    <location>
        <begin position="1"/>
        <end position="251"/>
    </location>
</feature>
<feature type="binding site" evidence="1">
    <location>
        <position position="8"/>
    </location>
    <ligand>
        <name>Zn(2+)</name>
        <dbReference type="ChEBI" id="CHEBI:29105"/>
        <label>1</label>
    </ligand>
</feature>
<feature type="binding site" evidence="1">
    <location>
        <position position="10"/>
    </location>
    <ligand>
        <name>Zn(2+)</name>
        <dbReference type="ChEBI" id="CHEBI:29105"/>
        <label>1</label>
    </ligand>
</feature>
<feature type="binding site" evidence="1">
    <location>
        <position position="16"/>
    </location>
    <ligand>
        <name>Zn(2+)</name>
        <dbReference type="ChEBI" id="CHEBI:29105"/>
        <label>2</label>
    </ligand>
</feature>
<feature type="binding site" evidence="1">
    <location>
        <position position="41"/>
    </location>
    <ligand>
        <name>Zn(2+)</name>
        <dbReference type="ChEBI" id="CHEBI:29105"/>
        <label>2</label>
    </ligand>
</feature>
<feature type="binding site" evidence="1">
    <location>
        <position position="74"/>
    </location>
    <ligand>
        <name>Zn(2+)</name>
        <dbReference type="ChEBI" id="CHEBI:29105"/>
        <label>1</label>
    </ligand>
</feature>
<feature type="binding site" evidence="1">
    <location>
        <position position="74"/>
    </location>
    <ligand>
        <name>Zn(2+)</name>
        <dbReference type="ChEBI" id="CHEBI:29105"/>
        <label>3</label>
    </ligand>
</feature>
<feature type="binding site" evidence="1">
    <location>
        <position position="102"/>
    </location>
    <ligand>
        <name>Zn(2+)</name>
        <dbReference type="ChEBI" id="CHEBI:29105"/>
        <label>3</label>
    </ligand>
</feature>
<feature type="binding site" evidence="1">
    <location>
        <position position="132"/>
    </location>
    <ligand>
        <name>Zn(2+)</name>
        <dbReference type="ChEBI" id="CHEBI:29105"/>
        <label>3</label>
    </ligand>
</feature>
<feature type="binding site" evidence="1">
    <location>
        <position position="193"/>
    </location>
    <ligand>
        <name>Zn(2+)</name>
        <dbReference type="ChEBI" id="CHEBI:29105"/>
        <label>1</label>
    </ligand>
</feature>
<feature type="binding site" evidence="1">
    <location>
        <position position="195"/>
    </location>
    <ligand>
        <name>Zn(2+)</name>
        <dbReference type="ChEBI" id="CHEBI:29105"/>
        <label>2</label>
    </ligand>
</feature>
<sequence length="251" mass="27108">MQYQVDTHTHTVASTHAYSTIHDYLAVAKQKGILLFATTDHGPAMADAPHFWHFVNLRVLPRMVDGVGILRGIEANIKNIDGEIDFFGDYLKQLDIVLAGFHEPVYPPSDKATHTEAMINTIKSGKVDIITHPGNPAYPIDIDAVARAAAEYGVALEINNSSFEVSRKGSEANCTAIAKAAKEFGTILVMGSDSHVAFSLGGFERALAIIDAAGYPKSQLLNRSPSVLLGFLAQRGHHTVADLQALFDEAV</sequence>
<keyword id="KW-0378">Hydrolase</keyword>
<keyword id="KW-0479">Metal-binding</keyword>
<keyword id="KW-0862">Zinc</keyword>
<dbReference type="EC" id="3.1.3.-" evidence="1"/>
<dbReference type="EMBL" id="CP000681">
    <property type="protein sequence ID" value="ABP75097.1"/>
    <property type="molecule type" value="Genomic_DNA"/>
</dbReference>
<dbReference type="SMR" id="A4Y564"/>
<dbReference type="STRING" id="319224.Sputcn32_1369"/>
<dbReference type="KEGG" id="spc:Sputcn32_1369"/>
<dbReference type="eggNOG" id="COG1387">
    <property type="taxonomic scope" value="Bacteria"/>
</dbReference>
<dbReference type="HOGENOM" id="CLU_061999_0_1_6"/>
<dbReference type="GO" id="GO:0005829">
    <property type="term" value="C:cytosol"/>
    <property type="evidence" value="ECO:0007669"/>
    <property type="project" value="TreeGrafter"/>
</dbReference>
<dbReference type="GO" id="GO:0016791">
    <property type="term" value="F:phosphatase activity"/>
    <property type="evidence" value="ECO:0007669"/>
    <property type="project" value="UniProtKB-UniRule"/>
</dbReference>
<dbReference type="GO" id="GO:0008270">
    <property type="term" value="F:zinc ion binding"/>
    <property type="evidence" value="ECO:0007669"/>
    <property type="project" value="UniProtKB-UniRule"/>
</dbReference>
<dbReference type="GO" id="GO:0071978">
    <property type="term" value="P:bacterial-type flagellum-dependent swarming motility"/>
    <property type="evidence" value="ECO:0007669"/>
    <property type="project" value="TreeGrafter"/>
</dbReference>
<dbReference type="CDD" id="cd07437">
    <property type="entry name" value="PHP_HisPPase_Ycdx_like"/>
    <property type="match status" value="1"/>
</dbReference>
<dbReference type="FunFam" id="3.20.20.140:FF:000008">
    <property type="entry name" value="Probable phosphatase YcdX"/>
    <property type="match status" value="1"/>
</dbReference>
<dbReference type="Gene3D" id="3.20.20.140">
    <property type="entry name" value="Metal-dependent hydrolases"/>
    <property type="match status" value="1"/>
</dbReference>
<dbReference type="HAMAP" id="MF_01561">
    <property type="entry name" value="YcdX_phosphat"/>
    <property type="match status" value="1"/>
</dbReference>
<dbReference type="InterPro" id="IPR023710">
    <property type="entry name" value="Phosphatase_YcdX_put"/>
</dbReference>
<dbReference type="InterPro" id="IPR004013">
    <property type="entry name" value="PHP_dom"/>
</dbReference>
<dbReference type="InterPro" id="IPR050243">
    <property type="entry name" value="PHP_phosphatase"/>
</dbReference>
<dbReference type="InterPro" id="IPR003141">
    <property type="entry name" value="Pol/His_phosphatase_N"/>
</dbReference>
<dbReference type="InterPro" id="IPR016195">
    <property type="entry name" value="Pol/histidinol_Pase-like"/>
</dbReference>
<dbReference type="NCBIfam" id="NF006702">
    <property type="entry name" value="PRK09248.1"/>
    <property type="match status" value="1"/>
</dbReference>
<dbReference type="PANTHER" id="PTHR36928">
    <property type="entry name" value="PHOSPHATASE YCDX-RELATED"/>
    <property type="match status" value="1"/>
</dbReference>
<dbReference type="PANTHER" id="PTHR36928:SF1">
    <property type="entry name" value="PHOSPHATASE YCDX-RELATED"/>
    <property type="match status" value="1"/>
</dbReference>
<dbReference type="Pfam" id="PF02811">
    <property type="entry name" value="PHP"/>
    <property type="match status" value="1"/>
</dbReference>
<dbReference type="SMART" id="SM00481">
    <property type="entry name" value="POLIIIAc"/>
    <property type="match status" value="1"/>
</dbReference>
<dbReference type="SUPFAM" id="SSF89550">
    <property type="entry name" value="PHP domain-like"/>
    <property type="match status" value="1"/>
</dbReference>
<evidence type="ECO:0000255" key="1">
    <source>
        <dbReference type="HAMAP-Rule" id="MF_01561"/>
    </source>
</evidence>
<name>Y1369_SHEPC</name>
<accession>A4Y564</accession>